<reference key="1">
    <citation type="journal article" date="2000" name="Nature">
        <title>Sequence and analysis of chromosome 3 of the plant Arabidopsis thaliana.</title>
        <authorList>
            <person name="Salanoubat M."/>
            <person name="Lemcke K."/>
            <person name="Rieger M."/>
            <person name="Ansorge W."/>
            <person name="Unseld M."/>
            <person name="Fartmann B."/>
            <person name="Valle G."/>
            <person name="Bloecker H."/>
            <person name="Perez-Alonso M."/>
            <person name="Obermaier B."/>
            <person name="Delseny M."/>
            <person name="Boutry M."/>
            <person name="Grivell L.A."/>
            <person name="Mache R."/>
            <person name="Puigdomenech P."/>
            <person name="De Simone V."/>
            <person name="Choisne N."/>
            <person name="Artiguenave F."/>
            <person name="Robert C."/>
            <person name="Brottier P."/>
            <person name="Wincker P."/>
            <person name="Cattolico L."/>
            <person name="Weissenbach J."/>
            <person name="Saurin W."/>
            <person name="Quetier F."/>
            <person name="Schaefer M."/>
            <person name="Mueller-Auer S."/>
            <person name="Gabel C."/>
            <person name="Fuchs M."/>
            <person name="Benes V."/>
            <person name="Wurmbach E."/>
            <person name="Drzonek H."/>
            <person name="Erfle H."/>
            <person name="Jordan N."/>
            <person name="Bangert S."/>
            <person name="Wiedelmann R."/>
            <person name="Kranz H."/>
            <person name="Voss H."/>
            <person name="Holland R."/>
            <person name="Brandt P."/>
            <person name="Nyakatura G."/>
            <person name="Vezzi A."/>
            <person name="D'Angelo M."/>
            <person name="Pallavicini A."/>
            <person name="Toppo S."/>
            <person name="Simionati B."/>
            <person name="Conrad A."/>
            <person name="Hornischer K."/>
            <person name="Kauer G."/>
            <person name="Loehnert T.-H."/>
            <person name="Nordsiek G."/>
            <person name="Reichelt J."/>
            <person name="Scharfe M."/>
            <person name="Schoen O."/>
            <person name="Bargues M."/>
            <person name="Terol J."/>
            <person name="Climent J."/>
            <person name="Navarro P."/>
            <person name="Collado C."/>
            <person name="Perez-Perez A."/>
            <person name="Ottenwaelder B."/>
            <person name="Duchemin D."/>
            <person name="Cooke R."/>
            <person name="Laudie M."/>
            <person name="Berger-Llauro C."/>
            <person name="Purnelle B."/>
            <person name="Masuy D."/>
            <person name="de Haan M."/>
            <person name="Maarse A.C."/>
            <person name="Alcaraz J.-P."/>
            <person name="Cottet A."/>
            <person name="Casacuberta E."/>
            <person name="Monfort A."/>
            <person name="Argiriou A."/>
            <person name="Flores M."/>
            <person name="Liguori R."/>
            <person name="Vitale D."/>
            <person name="Mannhaupt G."/>
            <person name="Haase D."/>
            <person name="Schoof H."/>
            <person name="Rudd S."/>
            <person name="Zaccaria P."/>
            <person name="Mewes H.-W."/>
            <person name="Mayer K.F.X."/>
            <person name="Kaul S."/>
            <person name="Town C.D."/>
            <person name="Koo H.L."/>
            <person name="Tallon L.J."/>
            <person name="Jenkins J."/>
            <person name="Rooney T."/>
            <person name="Rizzo M."/>
            <person name="Walts A."/>
            <person name="Utterback T."/>
            <person name="Fujii C.Y."/>
            <person name="Shea T.P."/>
            <person name="Creasy T.H."/>
            <person name="Haas B."/>
            <person name="Maiti R."/>
            <person name="Wu D."/>
            <person name="Peterson J."/>
            <person name="Van Aken S."/>
            <person name="Pai G."/>
            <person name="Militscher J."/>
            <person name="Sellers P."/>
            <person name="Gill J.E."/>
            <person name="Feldblyum T.V."/>
            <person name="Preuss D."/>
            <person name="Lin X."/>
            <person name="Nierman W.C."/>
            <person name="Salzberg S.L."/>
            <person name="White O."/>
            <person name="Venter J.C."/>
            <person name="Fraser C.M."/>
            <person name="Kaneko T."/>
            <person name="Nakamura Y."/>
            <person name="Sato S."/>
            <person name="Kato T."/>
            <person name="Asamizu E."/>
            <person name="Sasamoto S."/>
            <person name="Kimura T."/>
            <person name="Idesawa K."/>
            <person name="Kawashima K."/>
            <person name="Kishida Y."/>
            <person name="Kiyokawa C."/>
            <person name="Kohara M."/>
            <person name="Matsumoto M."/>
            <person name="Matsuno A."/>
            <person name="Muraki A."/>
            <person name="Nakayama S."/>
            <person name="Nakazaki N."/>
            <person name="Shinpo S."/>
            <person name="Takeuchi C."/>
            <person name="Wada T."/>
            <person name="Watanabe A."/>
            <person name="Yamada M."/>
            <person name="Yasuda M."/>
            <person name="Tabata S."/>
        </authorList>
    </citation>
    <scope>NUCLEOTIDE SEQUENCE [LARGE SCALE GENOMIC DNA]</scope>
    <source>
        <strain>cv. Columbia</strain>
    </source>
</reference>
<reference key="2">
    <citation type="journal article" date="2017" name="Plant J.">
        <title>Araport11: a complete reannotation of the Arabidopsis thaliana reference genome.</title>
        <authorList>
            <person name="Cheng C.Y."/>
            <person name="Krishnakumar V."/>
            <person name="Chan A.P."/>
            <person name="Thibaud-Nissen F."/>
            <person name="Schobel S."/>
            <person name="Town C.D."/>
        </authorList>
    </citation>
    <scope>GENOME REANNOTATION</scope>
    <source>
        <strain>cv. Columbia</strain>
    </source>
</reference>
<reference key="3">
    <citation type="journal article" date="2001" name="Plant Physiol.">
        <title>Phylogenetic relationships within cation transporter families of Arabidopsis.</title>
        <authorList>
            <person name="Maeser P."/>
            <person name="Thomine S."/>
            <person name="Schroeder J.I."/>
            <person name="Ward J.M."/>
            <person name="Hirschi K."/>
            <person name="Sze H."/>
            <person name="Talke I.N."/>
            <person name="Amtmann A."/>
            <person name="Maathuis F.J.M."/>
            <person name="Sanders D."/>
            <person name="Harper J.F."/>
            <person name="Tchieu J."/>
            <person name="Gribskov M."/>
            <person name="Persans M.W."/>
            <person name="Salt D.E."/>
            <person name="Kim S.A."/>
            <person name="Guerinot M.L."/>
        </authorList>
    </citation>
    <scope>GENE FAMILY</scope>
    <scope>NOMENCLATURE</scope>
</reference>
<protein>
    <recommendedName>
        <fullName>Putative metal tolerance protein C3</fullName>
        <shortName>AtMTPc3</shortName>
    </recommendedName>
    <alternativeName>
        <fullName>AtMTP8</fullName>
    </alternativeName>
</protein>
<name>MTPC3_ARATH</name>
<accession>Q9M2P2</accession>
<dbReference type="EMBL" id="AL132977">
    <property type="protein sequence ID" value="CAB67634.1"/>
    <property type="status" value="ALT_SEQ"/>
    <property type="molecule type" value="Genomic_DNA"/>
</dbReference>
<dbReference type="EMBL" id="CP002686">
    <property type="protein sequence ID" value="AEE79737.1"/>
    <property type="molecule type" value="Genomic_DNA"/>
</dbReference>
<dbReference type="EMBL" id="CP002686">
    <property type="protein sequence ID" value="ANM64639.1"/>
    <property type="molecule type" value="Genomic_DNA"/>
</dbReference>
<dbReference type="PIR" id="T46028">
    <property type="entry name" value="T46028"/>
</dbReference>
<dbReference type="RefSeq" id="NP_001319789.1">
    <property type="nucleotide sequence ID" value="NM_001339906.1"/>
</dbReference>
<dbReference type="RefSeq" id="NP_191365.2">
    <property type="nucleotide sequence ID" value="NM_115668.3"/>
</dbReference>
<dbReference type="SMR" id="Q9M2P2"/>
<dbReference type="FunCoup" id="Q9M2P2">
    <property type="interactions" value="5"/>
</dbReference>
<dbReference type="STRING" id="3702.Q9M2P2"/>
<dbReference type="TCDB" id="2.A.4.5.4">
    <property type="family name" value="the cation diffusion facilitator (cdf) family"/>
</dbReference>
<dbReference type="PaxDb" id="3702-AT3G58060.1"/>
<dbReference type="ProteomicsDB" id="250990"/>
<dbReference type="EnsemblPlants" id="AT3G58060.1">
    <property type="protein sequence ID" value="AT3G58060.1"/>
    <property type="gene ID" value="AT3G58060"/>
</dbReference>
<dbReference type="EnsemblPlants" id="AT3G58060.2">
    <property type="protein sequence ID" value="AT3G58060.2"/>
    <property type="gene ID" value="AT3G58060"/>
</dbReference>
<dbReference type="GeneID" id="824975"/>
<dbReference type="Gramene" id="AT3G58060.1">
    <property type="protein sequence ID" value="AT3G58060.1"/>
    <property type="gene ID" value="AT3G58060"/>
</dbReference>
<dbReference type="Gramene" id="AT3G58060.2">
    <property type="protein sequence ID" value="AT3G58060.2"/>
    <property type="gene ID" value="AT3G58060"/>
</dbReference>
<dbReference type="KEGG" id="ath:AT3G58060"/>
<dbReference type="Araport" id="AT3G58060"/>
<dbReference type="TAIR" id="AT3G58060">
    <property type="gene designation" value="MTP8"/>
</dbReference>
<dbReference type="eggNOG" id="KOG1485">
    <property type="taxonomic scope" value="Eukaryota"/>
</dbReference>
<dbReference type="HOGENOM" id="CLU_013430_2_3_1"/>
<dbReference type="InParanoid" id="Q9M2P2"/>
<dbReference type="OMA" id="MEVNYCP"/>
<dbReference type="OrthoDB" id="78296at2759"/>
<dbReference type="PhylomeDB" id="Q9M2P2"/>
<dbReference type="PRO" id="PR:Q9M2P2"/>
<dbReference type="Proteomes" id="UP000006548">
    <property type="component" value="Chromosome 3"/>
</dbReference>
<dbReference type="ExpressionAtlas" id="Q9M2P2">
    <property type="expression patterns" value="baseline and differential"/>
</dbReference>
<dbReference type="GO" id="GO:0009705">
    <property type="term" value="C:plant-type vacuole membrane"/>
    <property type="evidence" value="ECO:0000314"/>
    <property type="project" value="TAIR"/>
</dbReference>
<dbReference type="GO" id="GO:0035618">
    <property type="term" value="C:root hair"/>
    <property type="evidence" value="ECO:0000314"/>
    <property type="project" value="TAIR"/>
</dbReference>
<dbReference type="GO" id="GO:0005384">
    <property type="term" value="F:manganese ion transmembrane transporter activity"/>
    <property type="evidence" value="ECO:0000316"/>
    <property type="project" value="TAIR"/>
</dbReference>
<dbReference type="GO" id="GO:0006826">
    <property type="term" value="P:iron ion transport"/>
    <property type="evidence" value="ECO:0000316"/>
    <property type="project" value="TAIR"/>
</dbReference>
<dbReference type="GO" id="GO:0071421">
    <property type="term" value="P:manganese ion transmembrane transport"/>
    <property type="evidence" value="ECO:0000316"/>
    <property type="project" value="TAIR"/>
</dbReference>
<dbReference type="GO" id="GO:0048316">
    <property type="term" value="P:seed development"/>
    <property type="evidence" value="ECO:0000270"/>
    <property type="project" value="TAIR"/>
</dbReference>
<dbReference type="GO" id="GO:0009845">
    <property type="term" value="P:seed germination"/>
    <property type="evidence" value="ECO:0000315"/>
    <property type="project" value="TAIR"/>
</dbReference>
<dbReference type="FunFam" id="1.20.1510.10:FF:000015">
    <property type="entry name" value="Metal tolerance protein 4"/>
    <property type="match status" value="1"/>
</dbReference>
<dbReference type="FunFam" id="3.30.70.1350:FF:000005">
    <property type="entry name" value="Metal tolerance protein 4"/>
    <property type="match status" value="1"/>
</dbReference>
<dbReference type="Gene3D" id="1.20.1510.10">
    <property type="entry name" value="Cation efflux protein transmembrane domain"/>
    <property type="match status" value="1"/>
</dbReference>
<dbReference type="Gene3D" id="3.30.70.1350">
    <property type="entry name" value="Cation efflux protein, cytoplasmic domain"/>
    <property type="match status" value="1"/>
</dbReference>
<dbReference type="InterPro" id="IPR002524">
    <property type="entry name" value="Cation_efflux"/>
</dbReference>
<dbReference type="InterPro" id="IPR027470">
    <property type="entry name" value="Cation_efflux_CTD"/>
</dbReference>
<dbReference type="InterPro" id="IPR036837">
    <property type="entry name" value="Cation_efflux_CTD_sf"/>
</dbReference>
<dbReference type="InterPro" id="IPR027469">
    <property type="entry name" value="Cation_efflux_TMD_sf"/>
</dbReference>
<dbReference type="InterPro" id="IPR050291">
    <property type="entry name" value="CDF_Transporter"/>
</dbReference>
<dbReference type="NCBIfam" id="TIGR01297">
    <property type="entry name" value="CDF"/>
    <property type="match status" value="1"/>
</dbReference>
<dbReference type="PANTHER" id="PTHR43840:SF45">
    <property type="entry name" value="METAL TOLERANCE PROTEIN C3-RELATED"/>
    <property type="match status" value="1"/>
</dbReference>
<dbReference type="PANTHER" id="PTHR43840">
    <property type="entry name" value="MITOCHONDRIAL METAL TRANSPORTER 1-RELATED"/>
    <property type="match status" value="1"/>
</dbReference>
<dbReference type="Pfam" id="PF01545">
    <property type="entry name" value="Cation_efflux"/>
    <property type="match status" value="1"/>
</dbReference>
<dbReference type="Pfam" id="PF16916">
    <property type="entry name" value="ZT_dimer"/>
    <property type="match status" value="1"/>
</dbReference>
<dbReference type="SUPFAM" id="SSF160240">
    <property type="entry name" value="Cation efflux protein cytoplasmic domain-like"/>
    <property type="match status" value="1"/>
</dbReference>
<dbReference type="SUPFAM" id="SSF161111">
    <property type="entry name" value="Cation efflux protein transmembrane domain-like"/>
    <property type="match status" value="1"/>
</dbReference>
<evidence type="ECO:0000250" key="1"/>
<evidence type="ECO:0000255" key="2"/>
<evidence type="ECO:0000305" key="3"/>
<sequence>MEVNYCPETPLLSSNDHEAIDHKPKLTGMVSSMKSNFFADLPQKLRSKIDPENPLHLDVSKAAGLKEDEKEYYERQLATLKSFEEVESFLARSDEYTIDEKEEEEDRAERAAQELAMQISNWANIFLLALKIYATVKSGSIAIAASTLDSLLDLMAGGILWFTHLSMKNVNIYKYPIGKLRVQPVGIIIFAAVMATLGFQVLLVAAEQLISNEPSEKMNHVQLIWLYSIMLSATAIKLVLWIYCKSSRNHIVRAYAKDHHFDVVTNVLGLVAAVLANAFYWWLDPTGAILLAIYTIVNWSGTVMENAVSLIGQSAPPEVLQKLTYLVMRQGGDNIKHVDTVRAYTFGVLYFVEVDIELPEDLPLKEAHAIGESLQIKLEELPEVERAFVHLDFECHHKPEHSVLSTIPNDL</sequence>
<keyword id="KW-0472">Membrane</keyword>
<keyword id="KW-1185">Reference proteome</keyword>
<keyword id="KW-0812">Transmembrane</keyword>
<keyword id="KW-1133">Transmembrane helix</keyword>
<keyword id="KW-0813">Transport</keyword>
<keyword id="KW-0926">Vacuole</keyword>
<proteinExistence type="inferred from homology"/>
<organism>
    <name type="scientific">Arabidopsis thaliana</name>
    <name type="common">Mouse-ear cress</name>
    <dbReference type="NCBI Taxonomy" id="3702"/>
    <lineage>
        <taxon>Eukaryota</taxon>
        <taxon>Viridiplantae</taxon>
        <taxon>Streptophyta</taxon>
        <taxon>Embryophyta</taxon>
        <taxon>Tracheophyta</taxon>
        <taxon>Spermatophyta</taxon>
        <taxon>Magnoliopsida</taxon>
        <taxon>eudicotyledons</taxon>
        <taxon>Gunneridae</taxon>
        <taxon>Pentapetalae</taxon>
        <taxon>rosids</taxon>
        <taxon>malvids</taxon>
        <taxon>Brassicales</taxon>
        <taxon>Brassicaceae</taxon>
        <taxon>Camelineae</taxon>
        <taxon>Arabidopsis</taxon>
    </lineage>
</organism>
<feature type="chain" id="PRO_0000206122" description="Putative metal tolerance protein C3">
    <location>
        <begin position="1"/>
        <end position="411"/>
    </location>
</feature>
<feature type="topological domain" description="Cytoplasmic" evidence="2">
    <location>
        <begin position="1"/>
        <end position="115"/>
    </location>
</feature>
<feature type="transmembrane region" description="Helical" evidence="2">
    <location>
        <begin position="116"/>
        <end position="136"/>
    </location>
</feature>
<feature type="topological domain" description="Vacuolar" evidence="2">
    <location>
        <begin position="137"/>
        <end position="140"/>
    </location>
</feature>
<feature type="transmembrane region" description="Helical" evidence="2">
    <location>
        <begin position="141"/>
        <end position="161"/>
    </location>
</feature>
<feature type="topological domain" description="Cytoplasmic" evidence="2">
    <location>
        <begin position="162"/>
        <end position="184"/>
    </location>
</feature>
<feature type="transmembrane region" description="Helical" evidence="2">
    <location>
        <begin position="185"/>
        <end position="205"/>
    </location>
</feature>
<feature type="topological domain" description="Vacuolar" evidence="2">
    <location>
        <begin position="206"/>
        <end position="222"/>
    </location>
</feature>
<feature type="transmembrane region" description="Helical" evidence="2">
    <location>
        <begin position="223"/>
        <end position="243"/>
    </location>
</feature>
<feature type="topological domain" description="Cytoplasmic" evidence="2">
    <location>
        <begin position="244"/>
        <end position="262"/>
    </location>
</feature>
<feature type="transmembrane region" description="Helical" evidence="2">
    <location>
        <begin position="263"/>
        <end position="283"/>
    </location>
</feature>
<feature type="topological domain" description="Vacuolar" evidence="2">
    <location>
        <begin position="284"/>
        <end position="287"/>
    </location>
</feature>
<feature type="transmembrane region" description="Helical" evidence="2">
    <location>
        <begin position="288"/>
        <end position="308"/>
    </location>
</feature>
<feature type="topological domain" description="Cytoplasmic" evidence="2">
    <location>
        <begin position="309"/>
        <end position="390"/>
    </location>
</feature>
<gene>
    <name type="primary">MTPC3</name>
    <name type="synonym">MTP8</name>
    <name type="ordered locus">At3g58060</name>
    <name type="ORF">T10K17.270</name>
</gene>
<comment type="function">
    <text evidence="1">Involved in sequestration of excess metal in the cytoplasm into vacuoles to maintain metal homeostasis.</text>
</comment>
<comment type="subcellular location">
    <subcellularLocation>
        <location evidence="1">Vacuole membrane</location>
        <topology evidence="1">Multi-pass membrane protein</topology>
    </subcellularLocation>
    <text>Tonoplast.</text>
</comment>
<comment type="similarity">
    <text evidence="3">Belongs to the cation diffusion facilitator (CDF) transporter (TC 2.A.4) family.</text>
</comment>
<comment type="sequence caution" evidence="3">
    <conflict type="erroneous gene model prediction">
        <sequence resource="EMBL-CDS" id="CAB67634"/>
    </conflict>
</comment>